<reference key="1">
    <citation type="journal article" date="2006" name="Proc. Natl. Acad. Sci. U.S.A.">
        <title>Development and application of a suite of polysaccharide-degrading enzymes for analyzing plant cell walls.</title>
        <authorList>
            <person name="Bauer S."/>
            <person name="Vasu P."/>
            <person name="Persson S."/>
            <person name="Mort A.J."/>
            <person name="Somerville C.R."/>
        </authorList>
    </citation>
    <scope>NUCLEOTIDE SEQUENCE [MRNA]</scope>
    <scope>FUNCTION</scope>
    <source>
        <strain>FGSC A4 / ATCC 38163 / CBS 112.46 / NRRL 194 / M139</strain>
    </source>
</reference>
<reference key="2">
    <citation type="journal article" date="2005" name="Nature">
        <title>Sequencing of Aspergillus nidulans and comparative analysis with A. fumigatus and A. oryzae.</title>
        <authorList>
            <person name="Galagan J.E."/>
            <person name="Calvo S.E."/>
            <person name="Cuomo C."/>
            <person name="Ma L.-J."/>
            <person name="Wortman J.R."/>
            <person name="Batzoglou S."/>
            <person name="Lee S.-I."/>
            <person name="Bastuerkmen M."/>
            <person name="Spevak C.C."/>
            <person name="Clutterbuck J."/>
            <person name="Kapitonov V."/>
            <person name="Jurka J."/>
            <person name="Scazzocchio C."/>
            <person name="Farman M.L."/>
            <person name="Butler J."/>
            <person name="Purcell S."/>
            <person name="Harris S."/>
            <person name="Braus G.H."/>
            <person name="Draht O."/>
            <person name="Busch S."/>
            <person name="D'Enfert C."/>
            <person name="Bouchier C."/>
            <person name="Goldman G.H."/>
            <person name="Bell-Pedersen D."/>
            <person name="Griffiths-Jones S."/>
            <person name="Doonan J.H."/>
            <person name="Yu J."/>
            <person name="Vienken K."/>
            <person name="Pain A."/>
            <person name="Freitag M."/>
            <person name="Selker E.U."/>
            <person name="Archer D.B."/>
            <person name="Penalva M.A."/>
            <person name="Oakley B.R."/>
            <person name="Momany M."/>
            <person name="Tanaka T."/>
            <person name="Kumagai T."/>
            <person name="Asai K."/>
            <person name="Machida M."/>
            <person name="Nierman W.C."/>
            <person name="Denning D.W."/>
            <person name="Caddick M.X."/>
            <person name="Hynes M."/>
            <person name="Paoletti M."/>
            <person name="Fischer R."/>
            <person name="Miller B.L."/>
            <person name="Dyer P.S."/>
            <person name="Sachs M.S."/>
            <person name="Osmani S.A."/>
            <person name="Birren B.W."/>
        </authorList>
    </citation>
    <scope>NUCLEOTIDE SEQUENCE [LARGE SCALE GENOMIC DNA]</scope>
    <source>
        <strain>FGSC A4 / ATCC 38163 / CBS 112.46 / NRRL 194 / M139</strain>
    </source>
</reference>
<reference key="3">
    <citation type="journal article" date="2009" name="Fungal Genet. Biol.">
        <title>The 2008 update of the Aspergillus nidulans genome annotation: a community effort.</title>
        <authorList>
            <person name="Wortman J.R."/>
            <person name="Gilsenan J.M."/>
            <person name="Joardar V."/>
            <person name="Deegan J."/>
            <person name="Clutterbuck J."/>
            <person name="Andersen M.R."/>
            <person name="Archer D."/>
            <person name="Bencina M."/>
            <person name="Braus G."/>
            <person name="Coutinho P."/>
            <person name="von Dohren H."/>
            <person name="Doonan J."/>
            <person name="Driessen A.J."/>
            <person name="Durek P."/>
            <person name="Espeso E."/>
            <person name="Fekete E."/>
            <person name="Flipphi M."/>
            <person name="Estrada C.G."/>
            <person name="Geysens S."/>
            <person name="Goldman G."/>
            <person name="de Groot P.W."/>
            <person name="Hansen K."/>
            <person name="Harris S.D."/>
            <person name="Heinekamp T."/>
            <person name="Helmstaedt K."/>
            <person name="Henrissat B."/>
            <person name="Hofmann G."/>
            <person name="Homan T."/>
            <person name="Horio T."/>
            <person name="Horiuchi H."/>
            <person name="James S."/>
            <person name="Jones M."/>
            <person name="Karaffa L."/>
            <person name="Karanyi Z."/>
            <person name="Kato M."/>
            <person name="Keller N."/>
            <person name="Kelly D.E."/>
            <person name="Kiel J.A."/>
            <person name="Kim J.M."/>
            <person name="van der Klei I.J."/>
            <person name="Klis F.M."/>
            <person name="Kovalchuk A."/>
            <person name="Krasevec N."/>
            <person name="Kubicek C.P."/>
            <person name="Liu B."/>
            <person name="Maccabe A."/>
            <person name="Meyer V."/>
            <person name="Mirabito P."/>
            <person name="Miskei M."/>
            <person name="Mos M."/>
            <person name="Mullins J."/>
            <person name="Nelson D.R."/>
            <person name="Nielsen J."/>
            <person name="Oakley B.R."/>
            <person name="Osmani S.A."/>
            <person name="Pakula T."/>
            <person name="Paszewski A."/>
            <person name="Paulsen I."/>
            <person name="Pilsyk S."/>
            <person name="Pocsi I."/>
            <person name="Punt P.J."/>
            <person name="Ram A.F."/>
            <person name="Ren Q."/>
            <person name="Robellet X."/>
            <person name="Robson G."/>
            <person name="Seiboth B."/>
            <person name="van Solingen P."/>
            <person name="Specht T."/>
            <person name="Sun J."/>
            <person name="Taheri-Talesh N."/>
            <person name="Takeshita N."/>
            <person name="Ussery D."/>
            <person name="vanKuyk P.A."/>
            <person name="Visser H."/>
            <person name="van de Vondervoort P.J."/>
            <person name="de Vries R.P."/>
            <person name="Walton J."/>
            <person name="Xiang X."/>
            <person name="Xiong Y."/>
            <person name="Zeng A.P."/>
            <person name="Brandt B.W."/>
            <person name="Cornell M.J."/>
            <person name="van den Hondel C.A."/>
            <person name="Visser J."/>
            <person name="Oliver S.G."/>
            <person name="Turner G."/>
        </authorList>
    </citation>
    <scope>GENOME REANNOTATION</scope>
    <source>
        <strain>FGSC A4 / ATCC 38163 / CBS 112.46 / NRRL 194 / M139</strain>
    </source>
</reference>
<feature type="signal peptide" evidence="2">
    <location>
        <begin position="1"/>
        <end position="21"/>
    </location>
</feature>
<feature type="chain" id="PRO_0000394385" description="Rhamnogalacturonase A">
    <location>
        <begin position="22"/>
        <end position="507"/>
    </location>
</feature>
<feature type="region of interest" description="Disordered" evidence="3">
    <location>
        <begin position="462"/>
        <end position="507"/>
    </location>
</feature>
<feature type="compositionally biased region" description="Low complexity" evidence="3">
    <location>
        <begin position="462"/>
        <end position="491"/>
    </location>
</feature>
<feature type="compositionally biased region" description="Basic residues" evidence="3">
    <location>
        <begin position="492"/>
        <end position="507"/>
    </location>
</feature>
<feature type="active site" description="Proton donor" evidence="1">
    <location>
        <position position="215"/>
    </location>
</feature>
<feature type="active site" evidence="1">
    <location>
        <position position="290"/>
    </location>
</feature>
<feature type="glycosylation site" description="N-linked (GlcNAc...) asparagine" evidence="2">
    <location>
        <position position="235"/>
    </location>
</feature>
<feature type="glycosylation site" description="N-linked (GlcNAc...) asparagine" evidence="2">
    <location>
        <position position="317"/>
    </location>
</feature>
<feature type="disulfide bond" evidence="1">
    <location>
        <begin position="38"/>
        <end position="64"/>
    </location>
</feature>
<feature type="disulfide bond" evidence="1">
    <location>
        <begin position="217"/>
        <end position="234"/>
    </location>
</feature>
<feature type="disulfide bond" evidence="1">
    <location>
        <begin position="340"/>
        <end position="346"/>
    </location>
</feature>
<feature type="disulfide bond" evidence="1">
    <location>
        <begin position="368"/>
        <end position="377"/>
    </location>
</feature>
<comment type="function">
    <text evidence="4">Pectinolytic enzymes consist of four classes of enzymes: pectine lyase, polygalacturonase, pectin methylesterase and rhamnogalacturonase. Hydrolyzes alpha-D-galacturonopyranosyl-(1,2)-alpha-L-rhamnopyranosyl linkages in the backbone of the hairy regions of pectins. Active against linseed rhamnogalacturonan.</text>
</comment>
<comment type="catalytic activity">
    <reaction>
        <text>Endohydrolysis of alpha-D-GalA-(1-&gt;2)-alpha-L-Rha glycosidic bond in the rhamnogalacturonan I backbone with initial inversion of anomeric configuration releasing oligosaccharides with beta-D-GalA at the reducing end.</text>
        <dbReference type="EC" id="3.2.1.171"/>
    </reaction>
</comment>
<comment type="subcellular location">
    <subcellularLocation>
        <location evidence="1">Secreted</location>
    </subcellularLocation>
</comment>
<comment type="similarity">
    <text evidence="5">Belongs to the glycosyl hydrolase 28 family.</text>
</comment>
<comment type="sequence caution" evidence="5">
    <conflict type="erroneous gene model prediction">
        <sequence resource="EMBL-CDS" id="CBF82482"/>
    </conflict>
</comment>
<comment type="sequence caution" evidence="5">
    <conflict type="erroneous gene model prediction">
        <sequence resource="EMBL-CDS" id="EAA61967"/>
    </conflict>
</comment>
<proteinExistence type="evidence at transcript level"/>
<keyword id="KW-0119">Carbohydrate metabolism</keyword>
<keyword id="KW-0961">Cell wall biogenesis/degradation</keyword>
<keyword id="KW-1015">Disulfide bond</keyword>
<keyword id="KW-0325">Glycoprotein</keyword>
<keyword id="KW-0326">Glycosidase</keyword>
<keyword id="KW-0378">Hydrolase</keyword>
<keyword id="KW-0624">Polysaccharide degradation</keyword>
<keyword id="KW-1185">Reference proteome</keyword>
<keyword id="KW-0964">Secreted</keyword>
<keyword id="KW-0732">Signal</keyword>
<accession>Q5ARE6</accession>
<accession>C8VK67</accession>
<accession>Q1HFQ2</accession>
<gene>
    <name type="primary">rhgA</name>
    <name type="ORF">AN9134</name>
</gene>
<protein>
    <recommendedName>
        <fullName>Rhamnogalacturonase A</fullName>
        <shortName>RGase A</shortName>
        <shortName>RHG A</shortName>
        <ecNumber>3.2.1.171</ecNumber>
    </recommendedName>
</protein>
<name>RHGA_EMENI</name>
<organism>
    <name type="scientific">Emericella nidulans (strain FGSC A4 / ATCC 38163 / CBS 112.46 / NRRL 194 / M139)</name>
    <name type="common">Aspergillus nidulans</name>
    <dbReference type="NCBI Taxonomy" id="227321"/>
    <lineage>
        <taxon>Eukaryota</taxon>
        <taxon>Fungi</taxon>
        <taxon>Dikarya</taxon>
        <taxon>Ascomycota</taxon>
        <taxon>Pezizomycotina</taxon>
        <taxon>Eurotiomycetes</taxon>
        <taxon>Eurotiomycetidae</taxon>
        <taxon>Eurotiales</taxon>
        <taxon>Aspergillaceae</taxon>
        <taxon>Aspergillus</taxon>
        <taxon>Aspergillus subgen. Nidulantes</taxon>
    </lineage>
</organism>
<sequence>MYVSRLLLFLAPLLVKGQLSGSVGPLTSVSSKSQTKTCNVLDYGAVADKSTDIGPALSSAWDECADGGVVYIPPGDYAIETWVKLSGGKACAIQLDGIIYRTGTDGGNMIMIEHTSDFEFFSSTSKGAFQGYGYEFHAKGSSDGPRILRLYDVSDFSVHDVALVDSPLFHFSMDTCSNGEVYNMAIRGGNMGGLDGIDVWSTNVWIHDVEVTNKDECVTVKSPSKNILVENIYCNWSGGCAMGSLGTDTDISDIVYRNVYTWKSNQMYMVKSNGGSGTVSNLVLENFIGHGNAYSLDIDSAWSSMSTIEGDGVELKNVTIRNWKGTEADGSQRGPIKVKCASGAPCTDVTVEDFAMWTESGDEQTYVCENAFGDGFCLADGDGTSTFTTTLTASAAPSGYSAPSMDADLETAFGTDSEIPIPTIPTSFYPGATPYSALAGASVSSSQVPAASSSAEAKFVASPATSSPTATSTAISSVDPVSAATTTATSHGHGKSHHKHQCRAHRH</sequence>
<evidence type="ECO:0000250" key="1"/>
<evidence type="ECO:0000255" key="2"/>
<evidence type="ECO:0000256" key="3">
    <source>
        <dbReference type="SAM" id="MobiDB-lite"/>
    </source>
</evidence>
<evidence type="ECO:0000269" key="4">
    <source>
    </source>
</evidence>
<evidence type="ECO:0000305" key="5"/>
<dbReference type="EC" id="3.2.1.171"/>
<dbReference type="EMBL" id="DQ490522">
    <property type="protein sequence ID" value="ABF50898.1"/>
    <property type="molecule type" value="mRNA"/>
</dbReference>
<dbReference type="EMBL" id="AACD01000169">
    <property type="protein sequence ID" value="EAA61967.1"/>
    <property type="status" value="ALT_SEQ"/>
    <property type="molecule type" value="Genomic_DNA"/>
</dbReference>
<dbReference type="EMBL" id="BN001306">
    <property type="protein sequence ID" value="CBF82482.1"/>
    <property type="status" value="ALT_SEQ"/>
    <property type="molecule type" value="Genomic_DNA"/>
</dbReference>
<dbReference type="RefSeq" id="XP_682403.1">
    <property type="nucleotide sequence ID" value="XM_677311.1"/>
</dbReference>
<dbReference type="SMR" id="Q5ARE6"/>
<dbReference type="STRING" id="227321.Q5ARE6"/>
<dbReference type="CAZy" id="GH28">
    <property type="family name" value="Glycoside Hydrolase Family 28"/>
</dbReference>
<dbReference type="GlyCosmos" id="Q5ARE6">
    <property type="glycosylation" value="2 sites, No reported glycans"/>
</dbReference>
<dbReference type="KEGG" id="ani:ANIA_09134"/>
<dbReference type="VEuPathDB" id="FungiDB:AN9134"/>
<dbReference type="eggNOG" id="ENOG502R2FT">
    <property type="taxonomic scope" value="Eukaryota"/>
</dbReference>
<dbReference type="HOGENOM" id="CLU_016031_7_2_1"/>
<dbReference type="InParanoid" id="Q5ARE6"/>
<dbReference type="OrthoDB" id="2268901at2759"/>
<dbReference type="Proteomes" id="UP000000560">
    <property type="component" value="Chromosome VI"/>
</dbReference>
<dbReference type="GO" id="GO:0005576">
    <property type="term" value="C:extracellular region"/>
    <property type="evidence" value="ECO:0007669"/>
    <property type="project" value="UniProtKB-SubCell"/>
</dbReference>
<dbReference type="GO" id="GO:0004650">
    <property type="term" value="F:polygalacturonase activity"/>
    <property type="evidence" value="ECO:0007669"/>
    <property type="project" value="InterPro"/>
</dbReference>
<dbReference type="GO" id="GO:0046576">
    <property type="term" value="F:rhamnogalacturonan alpha-L-rhamnopyranosyl-(1-&gt;4)-alpha-D-galactopyranosyluronide lyase activity"/>
    <property type="evidence" value="ECO:0000314"/>
    <property type="project" value="UniProtKB"/>
</dbReference>
<dbReference type="GO" id="GO:0071555">
    <property type="term" value="P:cell wall organization"/>
    <property type="evidence" value="ECO:0007669"/>
    <property type="project" value="UniProtKB-KW"/>
</dbReference>
<dbReference type="GO" id="GO:0045490">
    <property type="term" value="P:pectin catabolic process"/>
    <property type="evidence" value="ECO:0000314"/>
    <property type="project" value="UniProtKB"/>
</dbReference>
<dbReference type="FunFam" id="2.160.20.10:FF:000025">
    <property type="entry name" value="Probable rhamnogalacturonase B"/>
    <property type="match status" value="1"/>
</dbReference>
<dbReference type="Gene3D" id="2.160.20.10">
    <property type="entry name" value="Single-stranded right-handed beta-helix, Pectin lyase-like"/>
    <property type="match status" value="1"/>
</dbReference>
<dbReference type="InterPro" id="IPR000743">
    <property type="entry name" value="Glyco_hydro_28"/>
</dbReference>
<dbReference type="InterPro" id="IPR012334">
    <property type="entry name" value="Pectin_lyas_fold"/>
</dbReference>
<dbReference type="InterPro" id="IPR011050">
    <property type="entry name" value="Pectin_lyase_fold/virulence"/>
</dbReference>
<dbReference type="InterPro" id="IPR024535">
    <property type="entry name" value="RHGA/B-epi-like_pectate_lyase"/>
</dbReference>
<dbReference type="PANTHER" id="PTHR31736">
    <property type="match status" value="1"/>
</dbReference>
<dbReference type="PANTHER" id="PTHR31736:SF19">
    <property type="entry name" value="PECTIN LYASE SUPERFAMILY PROTEIN-RELATED"/>
    <property type="match status" value="1"/>
</dbReference>
<dbReference type="Pfam" id="PF00295">
    <property type="entry name" value="Glyco_hydro_28"/>
    <property type="match status" value="1"/>
</dbReference>
<dbReference type="Pfam" id="PF12708">
    <property type="entry name" value="Pect-lyase_RHGA_epim"/>
    <property type="match status" value="1"/>
</dbReference>
<dbReference type="SUPFAM" id="SSF51126">
    <property type="entry name" value="Pectin lyase-like"/>
    <property type="match status" value="1"/>
</dbReference>